<protein>
    <recommendedName>
        <fullName>Putative endo-alpha-N-acetylgalactosaminidase</fullName>
        <ecNumber evidence="2">3.2.1.97</ecNumber>
    </recommendedName>
</protein>
<keyword id="KW-0106">Calcium</keyword>
<keyword id="KW-0134">Cell wall</keyword>
<keyword id="KW-0326">Glycosidase</keyword>
<keyword id="KW-0378">Hydrolase</keyword>
<keyword id="KW-0479">Metal-binding</keyword>
<keyword id="KW-0572">Peptidoglycan-anchor</keyword>
<keyword id="KW-1185">Reference proteome</keyword>
<keyword id="KW-0964">Secreted</keyword>
<keyword id="KW-0732">Signal</keyword>
<dbReference type="EC" id="3.2.1.97" evidence="2"/>
<dbReference type="EMBL" id="CP000910">
    <property type="protein sequence ID" value="ABY23063.1"/>
    <property type="status" value="ALT_SEQ"/>
    <property type="molecule type" value="Genomic_DNA"/>
</dbReference>
<dbReference type="EMBL" id="CP000910">
    <property type="protein sequence ID" value="ABY23064.1"/>
    <property type="status" value="ALT_SEQ"/>
    <property type="molecule type" value="Genomic_DNA"/>
</dbReference>
<dbReference type="EMBL" id="CP000910">
    <property type="protein sequence ID" value="ABY23065.1"/>
    <property type="status" value="ALT_SEQ"/>
    <property type="molecule type" value="Genomic_DNA"/>
</dbReference>
<dbReference type="EMBL" id="CP000910">
    <property type="protein sequence ID" value="ABY23066.1"/>
    <property type="status" value="ALT_SEQ"/>
    <property type="molecule type" value="Genomic_DNA"/>
</dbReference>
<dbReference type="RefSeq" id="WP_012244747.1">
    <property type="nucleotide sequence ID" value="NC_010168.1"/>
</dbReference>
<dbReference type="RefSeq" id="WP_012244748.1">
    <property type="nucleotide sequence ID" value="NC_010168.1"/>
</dbReference>
<dbReference type="SMR" id="A9WNA0"/>
<dbReference type="STRING" id="288705.RSal33209_1326"/>
<dbReference type="CAZy" id="CBM51">
    <property type="family name" value="Carbohydrate-Binding Module Family 51"/>
</dbReference>
<dbReference type="CAZy" id="GH101">
    <property type="family name" value="Glycoside Hydrolase Family 101"/>
</dbReference>
<dbReference type="KEGG" id="rsa:RSal33209_1326"/>
<dbReference type="KEGG" id="rsa:RSal33209_1327"/>
<dbReference type="KEGG" id="rsa:RSal33209_1328"/>
<dbReference type="KEGG" id="rsa:RSal33209_1329"/>
<dbReference type="eggNOG" id="COG0366">
    <property type="taxonomic scope" value="Bacteria"/>
</dbReference>
<dbReference type="eggNOG" id="COG1470">
    <property type="taxonomic scope" value="Bacteria"/>
</dbReference>
<dbReference type="HOGENOM" id="CLU_406451_0_0_11"/>
<dbReference type="Proteomes" id="UP000002007">
    <property type="component" value="Chromosome"/>
</dbReference>
<dbReference type="GO" id="GO:0005576">
    <property type="term" value="C:extracellular region"/>
    <property type="evidence" value="ECO:0007669"/>
    <property type="project" value="UniProtKB-KW"/>
</dbReference>
<dbReference type="GO" id="GO:0030246">
    <property type="term" value="F:carbohydrate binding"/>
    <property type="evidence" value="ECO:0007669"/>
    <property type="project" value="InterPro"/>
</dbReference>
<dbReference type="GO" id="GO:0033926">
    <property type="term" value="F:endo-alpha-N-acetylgalactosaminidase activity"/>
    <property type="evidence" value="ECO:0007669"/>
    <property type="project" value="UniProtKB-EC"/>
</dbReference>
<dbReference type="GO" id="GO:0046872">
    <property type="term" value="F:metal ion binding"/>
    <property type="evidence" value="ECO:0007669"/>
    <property type="project" value="UniProtKB-KW"/>
</dbReference>
<dbReference type="CDD" id="cd14244">
    <property type="entry name" value="GH_101_like"/>
    <property type="match status" value="1"/>
</dbReference>
<dbReference type="Gene3D" id="2.70.98.10">
    <property type="match status" value="1"/>
</dbReference>
<dbReference type="Gene3D" id="2.60.120.260">
    <property type="entry name" value="Galactose-binding domain-like"/>
    <property type="match status" value="2"/>
</dbReference>
<dbReference type="Gene3D" id="3.20.20.80">
    <property type="entry name" value="Glycosidases"/>
    <property type="match status" value="1"/>
</dbReference>
<dbReference type="Gene3D" id="2.60.120.1060">
    <property type="entry name" value="NPCBM/NEW2 domain"/>
    <property type="match status" value="1"/>
</dbReference>
<dbReference type="InterPro" id="IPR018905">
    <property type="entry name" value="A-galactase_NEW3"/>
</dbReference>
<dbReference type="InterPro" id="IPR025706">
    <property type="entry name" value="Endoa_GalNAc"/>
</dbReference>
<dbReference type="InterPro" id="IPR040633">
    <property type="entry name" value="Gal_mutarotas_3"/>
</dbReference>
<dbReference type="InterPro" id="IPR008979">
    <property type="entry name" value="Galactose-bd-like_sf"/>
</dbReference>
<dbReference type="InterPro" id="IPR014718">
    <property type="entry name" value="GH-type_carb-bd"/>
</dbReference>
<dbReference type="InterPro" id="IPR049314">
    <property type="entry name" value="GH101_dom-5"/>
</dbReference>
<dbReference type="InterPro" id="IPR040502">
    <property type="entry name" value="GH101_dom-6"/>
</dbReference>
<dbReference type="InterPro" id="IPR035364">
    <property type="entry name" value="Glyco_hyd_101_beta"/>
</dbReference>
<dbReference type="InterPro" id="IPR013222">
    <property type="entry name" value="Glyco_hyd_98_carb-bd"/>
</dbReference>
<dbReference type="InterPro" id="IPR019931">
    <property type="entry name" value="LPXTG_anchor"/>
</dbReference>
<dbReference type="InterPro" id="IPR038637">
    <property type="entry name" value="NPCBM_sf"/>
</dbReference>
<dbReference type="Pfam" id="PF18080">
    <property type="entry name" value="Gal_mutarotas_3"/>
    <property type="match status" value="1"/>
</dbReference>
<dbReference type="Pfam" id="PF17974">
    <property type="entry name" value="GalBD_like"/>
    <property type="match status" value="1"/>
</dbReference>
<dbReference type="Pfam" id="PF21466">
    <property type="entry name" value="GH101_dom-5"/>
    <property type="match status" value="1"/>
</dbReference>
<dbReference type="Pfam" id="PF17451">
    <property type="entry name" value="Glyco_hyd_101C"/>
    <property type="match status" value="1"/>
</dbReference>
<dbReference type="Pfam" id="PF12905">
    <property type="entry name" value="Glyco_hydro_101"/>
    <property type="match status" value="1"/>
</dbReference>
<dbReference type="Pfam" id="PF08305">
    <property type="entry name" value="NPCBM"/>
    <property type="match status" value="1"/>
</dbReference>
<dbReference type="Pfam" id="PF10633">
    <property type="entry name" value="NPCBM_assoc"/>
    <property type="match status" value="1"/>
</dbReference>
<dbReference type="SMART" id="SM00776">
    <property type="entry name" value="NPCBM"/>
    <property type="match status" value="1"/>
</dbReference>
<dbReference type="SUPFAM" id="SSF49785">
    <property type="entry name" value="Galactose-binding domain-like"/>
    <property type="match status" value="1"/>
</dbReference>
<dbReference type="PROSITE" id="PS50847">
    <property type="entry name" value="GRAM_POS_ANCHORING"/>
    <property type="match status" value="1"/>
</dbReference>
<organism>
    <name type="scientific">Renibacterium salmoninarum (strain ATCC 33209 / DSM 20767 / JCM 11484 / NBRC 15589 / NCIMB 2235)</name>
    <dbReference type="NCBI Taxonomy" id="288705"/>
    <lineage>
        <taxon>Bacteria</taxon>
        <taxon>Bacillati</taxon>
        <taxon>Actinomycetota</taxon>
        <taxon>Actinomycetes</taxon>
        <taxon>Micrococcales</taxon>
        <taxon>Micrococcaceae</taxon>
        <taxon>Renibacterium</taxon>
    </lineage>
</organism>
<gene>
    <name type="ordered locus">RSal33209_1326</name>
    <name type="ordered locus">RSal33209_1327</name>
    <name type="ordered locus">RSal33209_1328</name>
    <name type="ordered locus">RSal33209_1329</name>
</gene>
<reference key="1">
    <citation type="journal article" date="2008" name="J. Bacteriol.">
        <title>Genome sequence of the fish pathogen Renibacterium salmoninarum suggests reductive evolution away from an environmental Arthrobacter ancestor.</title>
        <authorList>
            <person name="Wiens G.D."/>
            <person name="Rockey D.D."/>
            <person name="Wu Z."/>
            <person name="Chang J."/>
            <person name="Levy R."/>
            <person name="Crane S."/>
            <person name="Chen D.S."/>
            <person name="Capri G.R."/>
            <person name="Burnett J.R."/>
            <person name="Sudheesh P.S."/>
            <person name="Schipma M.J."/>
            <person name="Burd H."/>
            <person name="Bhattacharyya A."/>
            <person name="Rhodes L.D."/>
            <person name="Kaul R."/>
            <person name="Strom M.S."/>
        </authorList>
    </citation>
    <scope>NUCLEOTIDE SEQUENCE [LARGE SCALE GENOMIC DNA]</scope>
    <source>
        <strain>ATCC 33209 / DSM 20767 / JCM 11484 / NBRC 15589 / NCIMB 2235</strain>
    </source>
</reference>
<reference key="2">
    <citation type="journal article" date="2010" name="J. Bioinform. Comput. Biol.">
        <title>GH101 family of glycoside hydrolases: subfamily structure and evolutionary connections with other families.</title>
        <authorList>
            <person name="Naumoff D.G."/>
        </authorList>
    </citation>
    <scope>IDENTIFICATION</scope>
    <scope>FAMILY ASSIGNMENT</scope>
</reference>
<accession>A9WNA0</accession>
<accession>A9WNA1</accession>
<accession>A9WNA2</accession>
<accession>A9WNA3</accession>
<comment type="function">
    <text evidence="2">Probably involved in the breakdown of mucin-type O-linked glycans. Specifically removes the T-antigen disaccharide (Gal-beta-1,3-GalNAc-alpha) from extracellular host glycoproteins.</text>
</comment>
<comment type="catalytic activity">
    <reaction evidence="2">
        <text>a 3-O-[beta-D-galactosyl-(1-&gt;3)-N-acetyl-alpha-D-galactosaminyl]-L-threonyl-[protein] + H2O = beta-D-galactosyl-(1-&gt;3)-N-acetyl-D-galactosamine + L-threonyl-[protein]</text>
        <dbReference type="Rhea" id="RHEA:54540"/>
        <dbReference type="Rhea" id="RHEA-COMP:11060"/>
        <dbReference type="Rhea" id="RHEA-COMP:13923"/>
        <dbReference type="ChEBI" id="CHEBI:15377"/>
        <dbReference type="ChEBI" id="CHEBI:30013"/>
        <dbReference type="ChEBI" id="CHEBI:137950"/>
        <dbReference type="ChEBI" id="CHEBI:546807"/>
        <dbReference type="EC" id="3.2.1.97"/>
    </reaction>
</comment>
<comment type="catalytic activity">
    <reaction evidence="2">
        <text>a 3-O-[beta-D-galactosyl-(1-&gt;3)-N-acetyl-alpha-D-galactosaminyl]-L-seryl-[protein] + H2O = beta-D-galactosyl-(1-&gt;3)-N-acetyl-D-galactosamine + L-seryl-[protein]</text>
        <dbReference type="Rhea" id="RHEA:30983"/>
        <dbReference type="Rhea" id="RHEA-COMP:9863"/>
        <dbReference type="Rhea" id="RHEA-COMP:13922"/>
        <dbReference type="ChEBI" id="CHEBI:15377"/>
        <dbReference type="ChEBI" id="CHEBI:29999"/>
        <dbReference type="ChEBI" id="CHEBI:137949"/>
        <dbReference type="ChEBI" id="CHEBI:546807"/>
        <dbReference type="EC" id="3.2.1.97"/>
    </reaction>
</comment>
<comment type="subcellular location">
    <subcellularLocation>
        <location evidence="6">Secreted</location>
        <location evidence="6">Cell wall</location>
        <topology evidence="6">Peptidoglycan-anchor</topology>
    </subcellularLocation>
</comment>
<comment type="miscellaneous">
    <text evidence="1">The hydrolysis reaction proceeds with retention of the anomeric configuration.</text>
</comment>
<comment type="similarity">
    <text evidence="6">Belongs to the glycosyl hydrolase 101 family. A subfamily.</text>
</comment>
<comment type="caution">
    <text evidence="6">The sequence shown here is a temptative reconstruction from the four submitted CDS; the exact positions of the frameshifts are unsure.</text>
</comment>
<comment type="sequence caution" evidence="6">
    <conflict type="frameshift">
        <sequence resource="EMBL-CDS" id="ABY23063"/>
    </conflict>
    <text>Produces separate ORFs.</text>
</comment>
<comment type="sequence caution" evidence="6">
    <conflict type="frameshift">
        <sequence resource="EMBL-CDS" id="ABY23064"/>
    </conflict>
    <text>Produces separate ORFs.</text>
</comment>
<comment type="sequence caution" evidence="6">
    <conflict type="frameshift">
        <sequence resource="EMBL-CDS" id="ABY23065"/>
    </conflict>
    <text>Produces separate ORFs.</text>
</comment>
<comment type="sequence caution" evidence="6">
    <conflict type="erroneous initiation">
        <sequence resource="EMBL-CDS" id="ABY23066"/>
    </conflict>
    <text>Extended N-terminus.</text>
</comment>
<comment type="sequence caution" evidence="6">
    <conflict type="frameshift">
        <sequence resource="EMBL-CDS" id="ABY23066"/>
    </conflict>
    <text>Produces separate ORFs.</text>
</comment>
<proteinExistence type="inferred from homology"/>
<feature type="signal peptide" evidence="3">
    <location>
        <begin position="1"/>
        <end position="41"/>
    </location>
</feature>
<feature type="chain" id="PRO_0000408866" description="Putative endo-alpha-N-acetylgalactosaminidase">
    <location>
        <begin position="42"/>
        <end position="1478"/>
    </location>
</feature>
<feature type="propeptide" id="PRO_0000408867" description="Removed by sortase" evidence="4">
    <location>
        <begin position="1479"/>
        <end position="1509"/>
    </location>
</feature>
<feature type="region of interest" description="Catalytic" evidence="1">
    <location>
        <begin position="313"/>
        <end position="585"/>
    </location>
</feature>
<feature type="region of interest" description="Disordered" evidence="5">
    <location>
        <begin position="1176"/>
        <end position="1197"/>
    </location>
</feature>
<feature type="region of interest" description="Disordered" evidence="5">
    <location>
        <begin position="1403"/>
        <end position="1439"/>
    </location>
</feature>
<feature type="short sequence motif" description="LPXTG sorting signal" evidence="4">
    <location>
        <begin position="1475"/>
        <end position="1479"/>
    </location>
</feature>
<feature type="compositionally biased region" description="Low complexity" evidence="5">
    <location>
        <begin position="1407"/>
        <end position="1428"/>
    </location>
</feature>
<feature type="compositionally biased region" description="Gly residues" evidence="5">
    <location>
        <begin position="1429"/>
        <end position="1439"/>
    </location>
</feature>
<feature type="active site" description="Nucleophile" evidence="1">
    <location>
        <position position="472"/>
    </location>
</feature>
<feature type="active site" description="Proton donor/acceptor" evidence="1">
    <location>
        <position position="498"/>
    </location>
</feature>
<feature type="binding site" evidence="1">
    <location>
        <position position="288"/>
    </location>
    <ligand>
        <name>Ca(2+)</name>
        <dbReference type="ChEBI" id="CHEBI:29108"/>
        <label>1</label>
    </ligand>
</feature>
<feature type="binding site" evidence="1">
    <location>
        <position position="290"/>
    </location>
    <ligand>
        <name>Ca(2+)</name>
        <dbReference type="ChEBI" id="CHEBI:29108"/>
        <label>1</label>
    </ligand>
</feature>
<feature type="binding site" evidence="1">
    <location>
        <position position="292"/>
    </location>
    <ligand>
        <name>Ca(2+)</name>
        <dbReference type="ChEBI" id="CHEBI:29108"/>
        <label>1</label>
    </ligand>
</feature>
<feature type="binding site" evidence="1">
    <location>
        <position position="294"/>
    </location>
    <ligand>
        <name>Ca(2+)</name>
        <dbReference type="ChEBI" id="CHEBI:29108"/>
        <label>1</label>
    </ligand>
</feature>
<feature type="binding site" evidence="1">
    <location>
        <position position="299"/>
    </location>
    <ligand>
        <name>Ca(2+)</name>
        <dbReference type="ChEBI" id="CHEBI:29108"/>
        <label>1</label>
    </ligand>
</feature>
<feature type="binding site" evidence="1">
    <location>
        <position position="369"/>
    </location>
    <ligand>
        <name>substrate</name>
    </ligand>
</feature>
<feature type="binding site" evidence="1">
    <location>
        <position position="878"/>
    </location>
    <ligand>
        <name>Ca(2+)</name>
        <dbReference type="ChEBI" id="CHEBI:29108"/>
        <label>2</label>
    </ligand>
</feature>
<feature type="binding site" evidence="1">
    <location>
        <position position="880"/>
    </location>
    <ligand>
        <name>Ca(2+)</name>
        <dbReference type="ChEBI" id="CHEBI:29108"/>
        <label>2</label>
    </ligand>
</feature>
<feature type="binding site" evidence="1">
    <location>
        <position position="926"/>
    </location>
    <ligand>
        <name>Ca(2+)</name>
        <dbReference type="ChEBI" id="CHEBI:29108"/>
        <label>2</label>
    </ligand>
</feature>
<feature type="binding site" evidence="1">
    <location>
        <position position="929"/>
    </location>
    <ligand>
        <name>Ca(2+)</name>
        <dbReference type="ChEBI" id="CHEBI:29108"/>
        <label>2</label>
    </ligand>
</feature>
<feature type="modified residue" description="Pentaglycyl murein peptidoglycan amidated threonine" evidence="4">
    <location>
        <position position="1478"/>
    </location>
</feature>
<sequence length="1509" mass="157347">MPFRGRRRQSALRGLSLAATFCLAAGSSGISGALFATPAQADPLPTAAGLSINSANLTVEVSADFPQALSYTETSSAKHLSGARTLASSITINGTDQPVKVSSQKADAQTVNYLITPNNLAGVSLDAQLRVEGMTLTFKISKIKDTAENRVNNLQIKNQDLVTVSSQEPGATVASAVVSVDRAVSGDTITNLSSTTALDPTAKRSMLAIAATDQLAAGFETNSLYDSGNTIGPSDQGKFWRQALADGTGADGKPAVKMAVSSGAWLYRSAGSDQTEELPWSKVVISGDANADGKVDWQDGAIAYRSIESKPAGGDDVKNRVVTHIPFNFASQATHPFLRTLDDVKHIALATDGLGQMALEKGYTSEGHDSANSDFGGNFNERAGGLTDFNAMLSGGSAYGATFGVHINNTEAYPEANSFSNDFVDPTKKGWNWLDQSFYIDQQRDILSGSQQQRIDQLRSEAGPNLTMAYVDVYYESGWKSYRLQKGLKDAGFSVASEFATAMPANNTWSHWANDEKHGGSNNIKAGTQILRFVDNSQRDIWNPDPLLGTSHIVEWEGWTNQNDYNAFLKNIWGNNLPVKFLQQQQITSWKSRSVDLTGGLKVTGTSLADRVISQQGVPVLKGSNYLLPWSAAPVSFGSGAVNDTTQNKLYHYSADGGTSTWQLTPQFATASSLQIYKLTDYGRELIGSVPVVNGSVTLTAEANQAYVLVADASVTTVPADPSYGAGSKVKDPGFNSAGLKDWNATGGAAVERTAQGLLVAKLGQGSSAISQTLGSLDPGSYSIGAWVEIEPTTLTVTPAGGAPISVTVDQSGAENFVASDEKRGTYFQRLRVLVDIANAGAPQLSISAPAGEAAVRIDDVRVVKANKVPTTGILSENFENTDQGWLPFIKGDAGGQTDPRTHIAKLNAPYTQKGWNGKTTSDVLDDTYSLHSHEENQGLVYRTSNYTLPLQAGRQYRVSFDYQASLANQYTWVSGYDSGKNPVQTASTAIPVATDTTRWSQTLSAGSCGPAWVGLQRTGSSGGAEFSMDNLLVEDLGPSAETPACASLSLTSGQDVIEQGQTNTFSASFSSSEAQSIAGLSVALDLPAGWTASAATPATAATLPAGGSLETQWKVQVPADADGDYTIKAKASYQTTVDPIGSRSATTETAVYTLPKPPTKDTYASDMQWIGTPSNGWGPVEKDQANGEQAQGDGPPLKLGGVTYPKGLGAHAASSIRYYVGSQCSAFTAVIGIDDFQKLKGQAVFSVLGDGNSLYTSPVMKGGAAAQTITVPLNGAKYVDLKVAISGANNGNAWSDWANAKFLCSAPVAPITLQPTLSVPTDSLQPGSAFTVRVDQLKSGSTAKAELHSDPIDLGSVQANNDGVASFQVTLAQDAPLGNHQIVVTGTDKNGLAATGTVDAQIKAANPNPGTGSNPGTGSNPGTDPGTGSAGGNSSGGGANGSGANGTYVNGSGGSFGNGAGMDAKTGSNSASSLAETGFSGLVLPLGIGLMLLLIGAAAIIVRRHRHS</sequence>
<name>GH101_RENSM</name>
<evidence type="ECO:0000250" key="1"/>
<evidence type="ECO:0000250" key="2">
    <source>
        <dbReference type="UniProtKB" id="Q8DR60"/>
    </source>
</evidence>
<evidence type="ECO:0000255" key="3"/>
<evidence type="ECO:0000255" key="4">
    <source>
        <dbReference type="PROSITE-ProRule" id="PRU00477"/>
    </source>
</evidence>
<evidence type="ECO:0000256" key="5">
    <source>
        <dbReference type="SAM" id="MobiDB-lite"/>
    </source>
</evidence>
<evidence type="ECO:0000305" key="6"/>